<name>TRI39_HUMAN</name>
<reference key="1">
    <citation type="journal article" date="2000" name="Biochem. Biophys. Res. Commun.">
        <title>Molecular cloning of testis-abundant finger protein/ring finger protein 23 (RNF23), a novel RING-B box-coiled coil-B30.2 protein on the class I region of the human MHC.</title>
        <authorList>
            <person name="Orimo A."/>
            <person name="Yamagishi T."/>
            <person name="Tominaga N."/>
            <person name="Yamauchi Y."/>
            <person name="Hishinuma T."/>
            <person name="Okada K."/>
            <person name="Suzuki M."/>
            <person name="Sato M."/>
            <person name="Nogi Y."/>
            <person name="Suzuki H."/>
            <person name="Inoue S."/>
            <person name="Yoshimura K."/>
            <person name="Shimizu Y."/>
            <person name="Muramatsu M."/>
        </authorList>
    </citation>
    <scope>NUCLEOTIDE SEQUENCE [MRNA] (ISOFORM 1)</scope>
    <source>
        <tissue>Testis</tissue>
    </source>
</reference>
<reference key="2">
    <citation type="submission" date="2003-05" db="EMBL/GenBank/DDBJ databases">
        <title>Cloning of human full-length CDSs in BD Creator(TM) system donor vector.</title>
        <authorList>
            <person name="Kalnine N."/>
            <person name="Chen X."/>
            <person name="Rolfs A."/>
            <person name="Halleck A."/>
            <person name="Hines L."/>
            <person name="Eisenstein S."/>
            <person name="Koundinya M."/>
            <person name="Raphael J."/>
            <person name="Moreira D."/>
            <person name="Kelley T."/>
            <person name="LaBaer J."/>
            <person name="Lin Y."/>
            <person name="Phelan M."/>
            <person name="Farmer A."/>
        </authorList>
    </citation>
    <scope>NUCLEOTIDE SEQUENCE [LARGE SCALE MRNA] (ISOFORM 2)</scope>
</reference>
<reference key="3">
    <citation type="submission" date="2003-05" db="EMBL/GenBank/DDBJ databases">
        <title>Genome diversity in HLA: a new strategy for detection of genetic polymorphisms in expressed genes within the HLA class III and class I regions.</title>
        <authorList>
            <person name="Shiina T."/>
            <person name="Ota M."/>
            <person name="Katsuyama Y."/>
            <person name="Hashimoto N."/>
            <person name="Siamak B."/>
            <person name="Inoko H."/>
        </authorList>
    </citation>
    <scope>NUCLEOTIDE SEQUENCE [LARGE SCALE GENOMIC DNA]</scope>
</reference>
<reference key="4">
    <citation type="journal article" date="2004" name="Nat. Genet.">
        <title>Complete sequencing and characterization of 21,243 full-length human cDNAs.</title>
        <authorList>
            <person name="Ota T."/>
            <person name="Suzuki Y."/>
            <person name="Nishikawa T."/>
            <person name="Otsuki T."/>
            <person name="Sugiyama T."/>
            <person name="Irie R."/>
            <person name="Wakamatsu A."/>
            <person name="Hayashi K."/>
            <person name="Sato H."/>
            <person name="Nagai K."/>
            <person name="Kimura K."/>
            <person name="Makita H."/>
            <person name="Sekine M."/>
            <person name="Obayashi M."/>
            <person name="Nishi T."/>
            <person name="Shibahara T."/>
            <person name="Tanaka T."/>
            <person name="Ishii S."/>
            <person name="Yamamoto J."/>
            <person name="Saito K."/>
            <person name="Kawai Y."/>
            <person name="Isono Y."/>
            <person name="Nakamura Y."/>
            <person name="Nagahari K."/>
            <person name="Murakami K."/>
            <person name="Yasuda T."/>
            <person name="Iwayanagi T."/>
            <person name="Wagatsuma M."/>
            <person name="Shiratori A."/>
            <person name="Sudo H."/>
            <person name="Hosoiri T."/>
            <person name="Kaku Y."/>
            <person name="Kodaira H."/>
            <person name="Kondo H."/>
            <person name="Sugawara M."/>
            <person name="Takahashi M."/>
            <person name="Kanda K."/>
            <person name="Yokoi T."/>
            <person name="Furuya T."/>
            <person name="Kikkawa E."/>
            <person name="Omura Y."/>
            <person name="Abe K."/>
            <person name="Kamihara K."/>
            <person name="Katsuta N."/>
            <person name="Sato K."/>
            <person name="Tanikawa M."/>
            <person name="Yamazaki M."/>
            <person name="Ninomiya K."/>
            <person name="Ishibashi T."/>
            <person name="Yamashita H."/>
            <person name="Murakawa K."/>
            <person name="Fujimori K."/>
            <person name="Tanai H."/>
            <person name="Kimata M."/>
            <person name="Watanabe M."/>
            <person name="Hiraoka S."/>
            <person name="Chiba Y."/>
            <person name="Ishida S."/>
            <person name="Ono Y."/>
            <person name="Takiguchi S."/>
            <person name="Watanabe S."/>
            <person name="Yosida M."/>
            <person name="Hotuta T."/>
            <person name="Kusano J."/>
            <person name="Kanehori K."/>
            <person name="Takahashi-Fujii A."/>
            <person name="Hara H."/>
            <person name="Tanase T.-O."/>
            <person name="Nomura Y."/>
            <person name="Togiya S."/>
            <person name="Komai F."/>
            <person name="Hara R."/>
            <person name="Takeuchi K."/>
            <person name="Arita M."/>
            <person name="Imose N."/>
            <person name="Musashino K."/>
            <person name="Yuuki H."/>
            <person name="Oshima A."/>
            <person name="Sasaki N."/>
            <person name="Aotsuka S."/>
            <person name="Yoshikawa Y."/>
            <person name="Matsunawa H."/>
            <person name="Ichihara T."/>
            <person name="Shiohata N."/>
            <person name="Sano S."/>
            <person name="Moriya S."/>
            <person name="Momiyama H."/>
            <person name="Satoh N."/>
            <person name="Takami S."/>
            <person name="Terashima Y."/>
            <person name="Suzuki O."/>
            <person name="Nakagawa S."/>
            <person name="Senoh A."/>
            <person name="Mizoguchi H."/>
            <person name="Goto Y."/>
            <person name="Shimizu F."/>
            <person name="Wakebe H."/>
            <person name="Hishigaki H."/>
            <person name="Watanabe T."/>
            <person name="Sugiyama A."/>
            <person name="Takemoto M."/>
            <person name="Kawakami B."/>
            <person name="Yamazaki M."/>
            <person name="Watanabe K."/>
            <person name="Kumagai A."/>
            <person name="Itakura S."/>
            <person name="Fukuzumi Y."/>
            <person name="Fujimori Y."/>
            <person name="Komiyama M."/>
            <person name="Tashiro H."/>
            <person name="Tanigami A."/>
            <person name="Fujiwara T."/>
            <person name="Ono T."/>
            <person name="Yamada K."/>
            <person name="Fujii Y."/>
            <person name="Ozaki K."/>
            <person name="Hirao M."/>
            <person name="Ohmori Y."/>
            <person name="Kawabata A."/>
            <person name="Hikiji T."/>
            <person name="Kobatake N."/>
            <person name="Inagaki H."/>
            <person name="Ikema Y."/>
            <person name="Okamoto S."/>
            <person name="Okitani R."/>
            <person name="Kawakami T."/>
            <person name="Noguchi S."/>
            <person name="Itoh T."/>
            <person name="Shigeta K."/>
            <person name="Senba T."/>
            <person name="Matsumura K."/>
            <person name="Nakajima Y."/>
            <person name="Mizuno T."/>
            <person name="Morinaga M."/>
            <person name="Sasaki M."/>
            <person name="Togashi T."/>
            <person name="Oyama M."/>
            <person name="Hata H."/>
            <person name="Watanabe M."/>
            <person name="Komatsu T."/>
            <person name="Mizushima-Sugano J."/>
            <person name="Satoh T."/>
            <person name="Shirai Y."/>
            <person name="Takahashi Y."/>
            <person name="Nakagawa K."/>
            <person name="Okumura K."/>
            <person name="Nagase T."/>
            <person name="Nomura N."/>
            <person name="Kikuchi H."/>
            <person name="Masuho Y."/>
            <person name="Yamashita R."/>
            <person name="Nakai K."/>
            <person name="Yada T."/>
            <person name="Nakamura Y."/>
            <person name="Ohara O."/>
            <person name="Isogai T."/>
            <person name="Sugano S."/>
        </authorList>
    </citation>
    <scope>NUCLEOTIDE SEQUENCE [LARGE SCALE MRNA] (ISOFORM 1)</scope>
    <source>
        <tissue>Testis</tissue>
    </source>
</reference>
<reference key="5">
    <citation type="journal article" date="2006" name="Genetics">
        <title>Rapid evolution of major histocompatibility complex class I genes in primates generates new disease alleles in humans via hitchhiking diversity.</title>
        <authorList>
            <person name="Shiina T."/>
            <person name="Ota M."/>
            <person name="Shimizu S."/>
            <person name="Katsuyama Y."/>
            <person name="Hashimoto N."/>
            <person name="Takasu M."/>
            <person name="Anzai T."/>
            <person name="Kulski J.K."/>
            <person name="Kikkawa E."/>
            <person name="Naruse T."/>
            <person name="Kimura N."/>
            <person name="Yanagiya K."/>
            <person name="Watanabe A."/>
            <person name="Hosomichi K."/>
            <person name="Kohara S."/>
            <person name="Iwamoto C."/>
            <person name="Umehara Y."/>
            <person name="Meyer A."/>
            <person name="Wanner V."/>
            <person name="Sano K."/>
            <person name="Macquin C."/>
            <person name="Ikeo K."/>
            <person name="Tokunaga K."/>
            <person name="Gojobori T."/>
            <person name="Inoko H."/>
            <person name="Bahram S."/>
        </authorList>
    </citation>
    <scope>NUCLEOTIDE SEQUENCE [LARGE SCALE GENOMIC DNA]</scope>
    <source>
        <tissue>Peripheral blood leukocyte</tissue>
    </source>
</reference>
<reference key="6">
    <citation type="journal article" date="2003" name="Nature">
        <title>The DNA sequence and analysis of human chromosome 6.</title>
        <authorList>
            <person name="Mungall A.J."/>
            <person name="Palmer S.A."/>
            <person name="Sims S.K."/>
            <person name="Edwards C.A."/>
            <person name="Ashurst J.L."/>
            <person name="Wilming L."/>
            <person name="Jones M.C."/>
            <person name="Horton R."/>
            <person name="Hunt S.E."/>
            <person name="Scott C.E."/>
            <person name="Gilbert J.G.R."/>
            <person name="Clamp M.E."/>
            <person name="Bethel G."/>
            <person name="Milne S."/>
            <person name="Ainscough R."/>
            <person name="Almeida J.P."/>
            <person name="Ambrose K.D."/>
            <person name="Andrews T.D."/>
            <person name="Ashwell R.I.S."/>
            <person name="Babbage A.K."/>
            <person name="Bagguley C.L."/>
            <person name="Bailey J."/>
            <person name="Banerjee R."/>
            <person name="Barker D.J."/>
            <person name="Barlow K.F."/>
            <person name="Bates K."/>
            <person name="Beare D.M."/>
            <person name="Beasley H."/>
            <person name="Beasley O."/>
            <person name="Bird C.P."/>
            <person name="Blakey S.E."/>
            <person name="Bray-Allen S."/>
            <person name="Brook J."/>
            <person name="Brown A.J."/>
            <person name="Brown J.Y."/>
            <person name="Burford D.C."/>
            <person name="Burrill W."/>
            <person name="Burton J."/>
            <person name="Carder C."/>
            <person name="Carter N.P."/>
            <person name="Chapman J.C."/>
            <person name="Clark S.Y."/>
            <person name="Clark G."/>
            <person name="Clee C.M."/>
            <person name="Clegg S."/>
            <person name="Cobley V."/>
            <person name="Collier R.E."/>
            <person name="Collins J.E."/>
            <person name="Colman L.K."/>
            <person name="Corby N.R."/>
            <person name="Coville G.J."/>
            <person name="Culley K.M."/>
            <person name="Dhami P."/>
            <person name="Davies J."/>
            <person name="Dunn M."/>
            <person name="Earthrowl M.E."/>
            <person name="Ellington A.E."/>
            <person name="Evans K.A."/>
            <person name="Faulkner L."/>
            <person name="Francis M.D."/>
            <person name="Frankish A."/>
            <person name="Frankland J."/>
            <person name="French L."/>
            <person name="Garner P."/>
            <person name="Garnett J."/>
            <person name="Ghori M.J."/>
            <person name="Gilby L.M."/>
            <person name="Gillson C.J."/>
            <person name="Glithero R.J."/>
            <person name="Grafham D.V."/>
            <person name="Grant M."/>
            <person name="Gribble S."/>
            <person name="Griffiths C."/>
            <person name="Griffiths M.N.D."/>
            <person name="Hall R."/>
            <person name="Halls K.S."/>
            <person name="Hammond S."/>
            <person name="Harley J.L."/>
            <person name="Hart E.A."/>
            <person name="Heath P.D."/>
            <person name="Heathcott R."/>
            <person name="Holmes S.J."/>
            <person name="Howden P.J."/>
            <person name="Howe K.L."/>
            <person name="Howell G.R."/>
            <person name="Huckle E."/>
            <person name="Humphray S.J."/>
            <person name="Humphries M.D."/>
            <person name="Hunt A.R."/>
            <person name="Johnson C.M."/>
            <person name="Joy A.A."/>
            <person name="Kay M."/>
            <person name="Keenan S.J."/>
            <person name="Kimberley A.M."/>
            <person name="King A."/>
            <person name="Laird G.K."/>
            <person name="Langford C."/>
            <person name="Lawlor S."/>
            <person name="Leongamornlert D.A."/>
            <person name="Leversha M."/>
            <person name="Lloyd C.R."/>
            <person name="Lloyd D.M."/>
            <person name="Loveland J.E."/>
            <person name="Lovell J."/>
            <person name="Martin S."/>
            <person name="Mashreghi-Mohammadi M."/>
            <person name="Maslen G.L."/>
            <person name="Matthews L."/>
            <person name="McCann O.T."/>
            <person name="McLaren S.J."/>
            <person name="McLay K."/>
            <person name="McMurray A."/>
            <person name="Moore M.J.F."/>
            <person name="Mullikin J.C."/>
            <person name="Niblett D."/>
            <person name="Nickerson T."/>
            <person name="Novik K.L."/>
            <person name="Oliver K."/>
            <person name="Overton-Larty E.K."/>
            <person name="Parker A."/>
            <person name="Patel R."/>
            <person name="Pearce A.V."/>
            <person name="Peck A.I."/>
            <person name="Phillimore B.J.C.T."/>
            <person name="Phillips S."/>
            <person name="Plumb R.W."/>
            <person name="Porter K.M."/>
            <person name="Ramsey Y."/>
            <person name="Ranby S.A."/>
            <person name="Rice C.M."/>
            <person name="Ross M.T."/>
            <person name="Searle S.M."/>
            <person name="Sehra H.K."/>
            <person name="Sheridan E."/>
            <person name="Skuce C.D."/>
            <person name="Smith S."/>
            <person name="Smith M."/>
            <person name="Spraggon L."/>
            <person name="Squares S.L."/>
            <person name="Steward C.A."/>
            <person name="Sycamore N."/>
            <person name="Tamlyn-Hall G."/>
            <person name="Tester J."/>
            <person name="Theaker A.J."/>
            <person name="Thomas D.W."/>
            <person name="Thorpe A."/>
            <person name="Tracey A."/>
            <person name="Tromans A."/>
            <person name="Tubby B."/>
            <person name="Wall M."/>
            <person name="Wallis J.M."/>
            <person name="West A.P."/>
            <person name="White S.S."/>
            <person name="Whitehead S.L."/>
            <person name="Whittaker H."/>
            <person name="Wild A."/>
            <person name="Willey D.J."/>
            <person name="Wilmer T.E."/>
            <person name="Wood J.M."/>
            <person name="Wray P.W."/>
            <person name="Wyatt J.C."/>
            <person name="Young L."/>
            <person name="Younger R.M."/>
            <person name="Bentley D.R."/>
            <person name="Coulson A."/>
            <person name="Durbin R.M."/>
            <person name="Hubbard T."/>
            <person name="Sulston J.E."/>
            <person name="Dunham I."/>
            <person name="Rogers J."/>
            <person name="Beck S."/>
        </authorList>
    </citation>
    <scope>NUCLEOTIDE SEQUENCE [LARGE SCALE GENOMIC DNA]</scope>
</reference>
<reference key="7">
    <citation type="submission" date="2005-07" db="EMBL/GenBank/DDBJ databases">
        <authorList>
            <person name="Mural R.J."/>
            <person name="Istrail S."/>
            <person name="Sutton G.G."/>
            <person name="Florea L."/>
            <person name="Halpern A.L."/>
            <person name="Mobarry C.M."/>
            <person name="Lippert R."/>
            <person name="Walenz B."/>
            <person name="Shatkay H."/>
            <person name="Dew I."/>
            <person name="Miller J.R."/>
            <person name="Flanigan M.J."/>
            <person name="Edwards N.J."/>
            <person name="Bolanos R."/>
            <person name="Fasulo D."/>
            <person name="Halldorsson B.V."/>
            <person name="Hannenhalli S."/>
            <person name="Turner R."/>
            <person name="Yooseph S."/>
            <person name="Lu F."/>
            <person name="Nusskern D.R."/>
            <person name="Shue B.C."/>
            <person name="Zheng X.H."/>
            <person name="Zhong F."/>
            <person name="Delcher A.L."/>
            <person name="Huson D.H."/>
            <person name="Kravitz S.A."/>
            <person name="Mouchard L."/>
            <person name="Reinert K."/>
            <person name="Remington K.A."/>
            <person name="Clark A.G."/>
            <person name="Waterman M.S."/>
            <person name="Eichler E.E."/>
            <person name="Adams M.D."/>
            <person name="Hunkapiller M.W."/>
            <person name="Myers E.W."/>
            <person name="Venter J.C."/>
        </authorList>
    </citation>
    <scope>NUCLEOTIDE SEQUENCE [LARGE SCALE GENOMIC DNA]</scope>
</reference>
<reference key="8">
    <citation type="journal article" date="2004" name="Genome Res.">
        <title>The status, quality, and expansion of the NIH full-length cDNA project: the Mammalian Gene Collection (MGC).</title>
        <authorList>
            <consortium name="The MGC Project Team"/>
        </authorList>
    </citation>
    <scope>NUCLEOTIDE SEQUENCE [LARGE SCALE MRNA] (ISOFORM 2)</scope>
    <source>
        <tissue>Colon</tissue>
        <tissue>Testis</tissue>
    </source>
</reference>
<reference key="9">
    <citation type="journal article" date="2009" name="Exp. Cell Res.">
        <title>TRIM39 is a MOAP-1-binding protein that stabilizes MOAP-1 through inhibition of its poly-ubiquitination process.</title>
        <authorList>
            <person name="Lee S.S."/>
            <person name="Fu N.Y."/>
            <person name="Sukumaran S.K."/>
            <person name="Wan K.F."/>
            <person name="Wan Q."/>
            <person name="Yu V.C."/>
        </authorList>
    </citation>
    <scope>FUNCTION</scope>
    <scope>TISSUE SPECIFICITY</scope>
    <scope>SUBCELLULAR LOCATION</scope>
    <scope>INTERACTION WITH MOAP1</scope>
</reference>
<reference key="10">
    <citation type="journal article" date="2012" name="J. Cell Biol.">
        <title>The Trim39 ubiquitin ligase inhibits APC/CCdh1-mediated degradation of the Bax activator MOAP-1.</title>
        <authorList>
            <person name="Huang N.J."/>
            <person name="Zhang L."/>
            <person name="Tang W."/>
            <person name="Chen C."/>
            <person name="Yang C.S."/>
            <person name="Kornbluth S."/>
        </authorList>
    </citation>
    <scope>FUNCTION</scope>
    <scope>AUTOUBIQUITINATION</scope>
</reference>
<reference key="11">
    <citation type="journal article" date="2012" name="Proc. Natl. Acad. Sci. U.S.A.">
        <title>TRIM39 regulates cell cycle progression and DNA damage responses via stabilizing p21.</title>
        <authorList>
            <person name="Zhang L."/>
            <person name="Mei Y."/>
            <person name="Fu N.Y."/>
            <person name="Guan L."/>
            <person name="Xie W."/>
            <person name="Liu H.H."/>
            <person name="Yu C.D."/>
            <person name="Yin Z."/>
            <person name="Yu V.C."/>
            <person name="You H."/>
        </authorList>
    </citation>
    <scope>ALTERNATIVE SPLICING (ISOFORMS 1 AND 2)</scope>
    <scope>FUNCTION (ISOFORMS 1 AND 2)</scope>
    <scope>SUBCELLULAR LOCATION (ISOFORMS 1 AND 2)</scope>
    <scope>INTERACTION WITH CDKN1A (ISOFORMS 1 AND 2)</scope>
</reference>
<reference key="12">
    <citation type="journal article" date="2016" name="Cell. Mol. Life Sci.">
        <title>TRIM39 negatively regulates the NFkappaB-mediated signaling pathway through stabilization of Cactin.</title>
        <authorList>
            <person name="Suzuki M."/>
            <person name="Watanabe M."/>
            <person name="Nakamaru Y."/>
            <person name="Takagi D."/>
            <person name="Takahashi H."/>
            <person name="Fukuda S."/>
            <person name="Hatakeyama S."/>
        </authorList>
    </citation>
    <scope>FUNCTION (ISOFORM 2)</scope>
    <scope>INTERACTION WITH CACTIN (ISOFORM 2)</scope>
</reference>
<reference key="13">
    <citation type="submission" date="2006-09" db="PDB data bank">
        <title>One sequence two fold ? correct fold of the ZF-B-box domain from human tripartite motif protein 39.</title>
        <authorList>
            <consortium name="RIKEN structural genomics initiative (RSGI)"/>
        </authorList>
    </citation>
    <scope>STRUCTURE BY NMR OF 104-143</scope>
</reference>
<accession>Q9HCM9</accession>
<accession>Q5STG3</accession>
<accession>Q5STG4</accession>
<accession>Q76BL3</accession>
<accession>Q8IYT9</accession>
<accession>Q96IB6</accession>
<sequence length="518" mass="59690">MAETSLLEAGASAASTAAALENLQVEASCSVCLEYLKEPVIIECGHNFCKACITRWWEDLERDFPCPVCRKTSRYRSLRPNRQLGSMVEIAKQLQAVKRKIRDESLCPQHHEALSLFCYEDQEAVCLICAISHTHRAHTVVPLDDATQEYKEKLQKCLEPLEQKLQEITRCKSSEEKKPGELKRLVESRRQQILREFEELHRRLDEEQQVLLSRLEEEEQDILQRLRENAAHLGDKRRDLAHLAAEVEGKCLQSGFEMLKDVKSTLEKNIPRKFGGSLSTICPRDHKALLGLVKEINRCEKVKTMEVTSVSIELEKNFSNFPRQYFALRKILKQLIADVTLDPETAHPNLVLSEDRKSVKFVETRLRDLPDTPRRFTFYPCVLATEGFTSGRHYWEVEVGDKTHWAVGVCRDSVSRKGELTPLPETGYWRVRLWNGDKYAATTTPFTPLHIKVKPKRVGIFLDYEAGTLSFYNVTDRSHIYTFTDTFTEKLWPLFYPGIRAGRKNAAPLTIRPPTDWE</sequence>
<proteinExistence type="evidence at protein level"/>
<dbReference type="EC" id="2.3.2.27"/>
<dbReference type="EMBL" id="AB046381">
    <property type="protein sequence ID" value="BAB16374.1"/>
    <property type="molecule type" value="mRNA"/>
</dbReference>
<dbReference type="EMBL" id="BT007370">
    <property type="protein sequence ID" value="AAP36034.1"/>
    <property type="molecule type" value="mRNA"/>
</dbReference>
<dbReference type="EMBL" id="AB110937">
    <property type="protein sequence ID" value="BAD13703.1"/>
    <property type="molecule type" value="Genomic_DNA"/>
</dbReference>
<dbReference type="EMBL" id="AK292512">
    <property type="protein sequence ID" value="BAF85201.1"/>
    <property type="molecule type" value="mRNA"/>
</dbReference>
<dbReference type="EMBL" id="AB110938">
    <property type="protein sequence ID" value="BAD13704.1"/>
    <property type="molecule type" value="Genomic_DNA"/>
</dbReference>
<dbReference type="EMBL" id="AB202089">
    <property type="protein sequence ID" value="BAE78608.1"/>
    <property type="molecule type" value="Genomic_DNA"/>
</dbReference>
<dbReference type="EMBL" id="AL662832">
    <property type="status" value="NOT_ANNOTATED_CDS"/>
    <property type="molecule type" value="Genomic_DNA"/>
</dbReference>
<dbReference type="EMBL" id="AL662795">
    <property type="status" value="NOT_ANNOTATED_CDS"/>
    <property type="molecule type" value="Genomic_DNA"/>
</dbReference>
<dbReference type="EMBL" id="AL773535">
    <property type="status" value="NOT_ANNOTATED_CDS"/>
    <property type="molecule type" value="Genomic_DNA"/>
</dbReference>
<dbReference type="EMBL" id="BX248580">
    <property type="status" value="NOT_ANNOTATED_CDS"/>
    <property type="molecule type" value="Genomic_DNA"/>
</dbReference>
<dbReference type="EMBL" id="CR759928">
    <property type="status" value="NOT_ANNOTATED_CDS"/>
    <property type="molecule type" value="Genomic_DNA"/>
</dbReference>
<dbReference type="EMBL" id="BX927214">
    <property type="status" value="NOT_ANNOTATED_CDS"/>
    <property type="molecule type" value="Genomic_DNA"/>
</dbReference>
<dbReference type="EMBL" id="CR759281">
    <property type="status" value="NOT_ANNOTATED_CDS"/>
    <property type="molecule type" value="Genomic_DNA"/>
</dbReference>
<dbReference type="EMBL" id="CH471081">
    <property type="protein sequence ID" value="EAX03283.1"/>
    <property type="molecule type" value="Genomic_DNA"/>
</dbReference>
<dbReference type="EMBL" id="CH471081">
    <property type="protein sequence ID" value="EAX03284.1"/>
    <property type="molecule type" value="Genomic_DNA"/>
</dbReference>
<dbReference type="EMBL" id="BC007661">
    <property type="protein sequence ID" value="AAH07661.1"/>
    <property type="molecule type" value="mRNA"/>
</dbReference>
<dbReference type="EMBL" id="BC034985">
    <property type="protein sequence ID" value="AAH34985.1"/>
    <property type="molecule type" value="mRNA"/>
</dbReference>
<dbReference type="CCDS" id="CCDS34377.1">
    <molecule id="Q9HCM9-1"/>
</dbReference>
<dbReference type="CCDS" id="CCDS34378.1">
    <molecule id="Q9HCM9-2"/>
</dbReference>
<dbReference type="PIR" id="JC7387">
    <property type="entry name" value="JC7387"/>
</dbReference>
<dbReference type="RefSeq" id="NP_001356450.1">
    <molecule id="Q9HCM9-2"/>
    <property type="nucleotide sequence ID" value="NM_001369521.2"/>
</dbReference>
<dbReference type="RefSeq" id="NP_001356451.1">
    <molecule id="Q9HCM9-2"/>
    <property type="nucleotide sequence ID" value="NM_001369522.1"/>
</dbReference>
<dbReference type="RefSeq" id="NP_001356452.1">
    <molecule id="Q9HCM9-2"/>
    <property type="nucleotide sequence ID" value="NM_001369523.1"/>
</dbReference>
<dbReference type="RefSeq" id="NP_067076.2">
    <molecule id="Q9HCM9-1"/>
    <property type="nucleotide sequence ID" value="NM_021253.3"/>
</dbReference>
<dbReference type="RefSeq" id="NP_742013.1">
    <molecule id="Q9HCM9-2"/>
    <property type="nucleotide sequence ID" value="NM_172016.2"/>
</dbReference>
<dbReference type="PDB" id="2DID">
    <property type="method" value="NMR"/>
    <property type="chains" value="A=104-143"/>
</dbReference>
<dbReference type="PDB" id="2DIF">
    <property type="method" value="NMR"/>
    <property type="chains" value="A=104-143"/>
</dbReference>
<dbReference type="PDB" id="2ECJ">
    <property type="method" value="NMR"/>
    <property type="chains" value="A=19-69"/>
</dbReference>
<dbReference type="PDBsum" id="2DID"/>
<dbReference type="PDBsum" id="2DIF"/>
<dbReference type="PDBsum" id="2ECJ"/>
<dbReference type="BMRB" id="Q9HCM9"/>
<dbReference type="SMR" id="Q9HCM9"/>
<dbReference type="BioGRID" id="121170">
    <property type="interactions" value="119"/>
</dbReference>
<dbReference type="FunCoup" id="Q9HCM9">
    <property type="interactions" value="2447"/>
</dbReference>
<dbReference type="IntAct" id="Q9HCM9">
    <property type="interactions" value="97"/>
</dbReference>
<dbReference type="MINT" id="Q9HCM9"/>
<dbReference type="STRING" id="9606.ENSP00000365844"/>
<dbReference type="GlyGen" id="Q9HCM9">
    <property type="glycosylation" value="2 sites, 1 O-linked glycan (2 sites)"/>
</dbReference>
<dbReference type="iPTMnet" id="Q9HCM9"/>
<dbReference type="PhosphoSitePlus" id="Q9HCM9"/>
<dbReference type="BioMuta" id="TRIM39"/>
<dbReference type="DMDM" id="56405385"/>
<dbReference type="jPOST" id="Q9HCM9"/>
<dbReference type="MassIVE" id="Q9HCM9"/>
<dbReference type="PaxDb" id="9606-ENSP00000365844"/>
<dbReference type="PeptideAtlas" id="Q9HCM9"/>
<dbReference type="ProteomicsDB" id="81768">
    <molecule id="Q9HCM9-1"/>
</dbReference>
<dbReference type="ProteomicsDB" id="81769">
    <molecule id="Q9HCM9-2"/>
</dbReference>
<dbReference type="Antibodypedia" id="34966">
    <property type="antibodies" value="272 antibodies from 29 providers"/>
</dbReference>
<dbReference type="DNASU" id="56658"/>
<dbReference type="Ensembl" id="ENST00000376656.8">
    <molecule id="Q9HCM9-1"/>
    <property type="protein sequence ID" value="ENSP00000365844.4"/>
    <property type="gene ID" value="ENSG00000204599.16"/>
</dbReference>
<dbReference type="Ensembl" id="ENST00000376659.9">
    <molecule id="Q9HCM9-2"/>
    <property type="protein sequence ID" value="ENSP00000365847.5"/>
    <property type="gene ID" value="ENSG00000204599.16"/>
</dbReference>
<dbReference type="Ensembl" id="ENST00000383601.6">
    <molecule id="Q9HCM9-2"/>
    <property type="protein sequence ID" value="ENSP00000373095.2"/>
    <property type="gene ID" value="ENSG00000206495.12"/>
</dbReference>
<dbReference type="Ensembl" id="ENST00000383602.6">
    <molecule id="Q9HCM9-1"/>
    <property type="protein sequence ID" value="ENSP00000373096.2"/>
    <property type="gene ID" value="ENSG00000206495.12"/>
</dbReference>
<dbReference type="Ensembl" id="ENST00000383603.8">
    <molecule id="Q9HCM9-2"/>
    <property type="protein sequence ID" value="ENSP00000373097.4"/>
    <property type="gene ID" value="ENSG00000206495.12"/>
</dbReference>
<dbReference type="Ensembl" id="ENST00000396547.5">
    <molecule id="Q9HCM9-1"/>
    <property type="protein sequence ID" value="ENSP00000379796.1"/>
    <property type="gene ID" value="ENSG00000204599.16"/>
</dbReference>
<dbReference type="Ensembl" id="ENST00000396548.5">
    <molecule id="Q9HCM9-2"/>
    <property type="protein sequence ID" value="ENSP00000379797.1"/>
    <property type="gene ID" value="ENSG00000204599.16"/>
</dbReference>
<dbReference type="Ensembl" id="ENST00000396551.9">
    <molecule id="Q9HCM9-2"/>
    <property type="protein sequence ID" value="ENSP00000379800.3"/>
    <property type="gene ID" value="ENSG00000204599.16"/>
</dbReference>
<dbReference type="Ensembl" id="ENST00000400644.5">
    <molecule id="Q9HCM9-2"/>
    <property type="protein sequence ID" value="ENSP00000383486.1"/>
    <property type="gene ID" value="ENSG00000206495.12"/>
</dbReference>
<dbReference type="Ensembl" id="ENST00000413715.5">
    <molecule id="Q9HCM9-1"/>
    <property type="protein sequence ID" value="ENSP00000411949.1"/>
    <property type="gene ID" value="ENSG00000224994.10"/>
</dbReference>
<dbReference type="Ensembl" id="ENST00000414015.6">
    <molecule id="Q9HCM9-2"/>
    <property type="protein sequence ID" value="ENSP00000401071.2"/>
    <property type="gene ID" value="ENSG00000224994.10"/>
</dbReference>
<dbReference type="Ensembl" id="ENST00000419790.6">
    <molecule id="Q9HCM9-2"/>
    <property type="protein sequence ID" value="ENSP00000401184.2"/>
    <property type="gene ID" value="ENSG00000229929.10"/>
</dbReference>
<dbReference type="Ensembl" id="ENST00000424575.5">
    <molecule id="Q9HCM9-1"/>
    <property type="protein sequence ID" value="ENSP00000409902.1"/>
    <property type="gene ID" value="ENSG00000230308.10"/>
</dbReference>
<dbReference type="Ensembl" id="ENST00000426469.5">
    <molecule id="Q9HCM9-1"/>
    <property type="protein sequence ID" value="ENSP00000397043.1"/>
    <property type="gene ID" value="ENSG00000229929.10"/>
</dbReference>
<dbReference type="Ensembl" id="ENST00000430502.5">
    <molecule id="Q9HCM9-2"/>
    <property type="protein sequence ID" value="ENSP00000398956.1"/>
    <property type="gene ID" value="ENSG00000232839.10"/>
</dbReference>
<dbReference type="Ensembl" id="ENST00000431272.6">
    <molecule id="Q9HCM9-2"/>
    <property type="protein sequence ID" value="ENSP00000396986.2"/>
    <property type="gene ID" value="ENSG00000230308.10"/>
</dbReference>
<dbReference type="Ensembl" id="ENST00000433900.6">
    <molecule id="Q9HCM9-2"/>
    <property type="protein sequence ID" value="ENSP00000389852.2"/>
    <property type="gene ID" value="ENSG00000232839.10"/>
</dbReference>
<dbReference type="Ensembl" id="ENST00000438076.5">
    <molecule id="Q9HCM9-2"/>
    <property type="protein sequence ID" value="ENSP00000389198.1"/>
    <property type="gene ID" value="ENSG00000232839.10"/>
</dbReference>
<dbReference type="Ensembl" id="ENST00000438859.5">
    <molecule id="Q9HCM9-2"/>
    <property type="protein sequence ID" value="ENSP00000411582.1"/>
    <property type="gene ID" value="ENSG00000226437.10"/>
</dbReference>
<dbReference type="Ensembl" id="ENST00000440117.5">
    <molecule id="Q9HCM9-2"/>
    <property type="protein sequence ID" value="ENSP00000392130.1"/>
    <property type="gene ID" value="ENSG00000224994.10"/>
</dbReference>
<dbReference type="Ensembl" id="ENST00000443109.5">
    <molecule id="Q9HCM9-2"/>
    <property type="protein sequence ID" value="ENSP00000414525.1"/>
    <property type="gene ID" value="ENSG00000229929.10"/>
</dbReference>
<dbReference type="Ensembl" id="ENST00000445206.5">
    <molecule id="Q9HCM9-1"/>
    <property type="protein sequence ID" value="ENSP00000391917.1"/>
    <property type="gene ID" value="ENSG00000226437.10"/>
</dbReference>
<dbReference type="Ensembl" id="ENST00000446397.5">
    <molecule id="Q9HCM9-2"/>
    <property type="protein sequence ID" value="ENSP00000412743.1"/>
    <property type="gene ID" value="ENSG00000230308.10"/>
</dbReference>
<dbReference type="Ensembl" id="ENST00000449318.5">
    <molecule id="Q9HCM9-2"/>
    <property type="protein sequence ID" value="ENSP00000404904.1"/>
    <property type="gene ID" value="ENSG00000224994.10"/>
</dbReference>
<dbReference type="Ensembl" id="ENST00000450778.6">
    <molecule id="Q9HCM9-2"/>
    <property type="protein sequence ID" value="ENSP00000387445.2"/>
    <property type="gene ID" value="ENSG00000226437.10"/>
</dbReference>
<dbReference type="Ensembl" id="ENST00000451132.5">
    <molecule id="Q9HCM9-2"/>
    <property type="protein sequence ID" value="ENSP00000394353.1"/>
    <property type="gene ID" value="ENSG00000226437.10"/>
</dbReference>
<dbReference type="Ensembl" id="ENST00000451715.5">
    <molecule id="Q9HCM9-1"/>
    <property type="protein sequence ID" value="ENSP00000398355.1"/>
    <property type="gene ID" value="ENSG00000232839.10"/>
</dbReference>
<dbReference type="Ensembl" id="ENST00000452705.5">
    <molecule id="Q9HCM9-2"/>
    <property type="protein sequence ID" value="ENSP00000415259.1"/>
    <property type="gene ID" value="ENSG00000229929.10"/>
</dbReference>
<dbReference type="Ensembl" id="ENST00000458607.5">
    <molecule id="Q9HCM9-2"/>
    <property type="protein sequence ID" value="ENSP00000404340.1"/>
    <property type="gene ID" value="ENSG00000230308.10"/>
</dbReference>
<dbReference type="Ensembl" id="ENST00000547030.3">
    <molecule id="Q9HCM9-1"/>
    <property type="protein sequence ID" value="ENSP00000449847.1"/>
    <property type="gene ID" value="ENSG00000224994.10"/>
</dbReference>
<dbReference type="Ensembl" id="ENST00000548002.1">
    <molecule id="Q9HCM9-1"/>
    <property type="protein sequence ID" value="ENSP00000447835.1"/>
    <property type="gene ID" value="ENSG00000232839.10"/>
</dbReference>
<dbReference type="Ensembl" id="ENST00000549841.3">
    <molecule id="Q9HCM9-1"/>
    <property type="protein sequence ID" value="ENSP00000448572.1"/>
    <property type="gene ID" value="ENSG00000230308.10"/>
</dbReference>
<dbReference type="Ensembl" id="ENST00000550282.5">
    <molecule id="Q9HCM9-1"/>
    <property type="protein sequence ID" value="ENSP00000449272.1"/>
    <property type="gene ID" value="ENSG00000206495.12"/>
</dbReference>
<dbReference type="Ensembl" id="ENST00000552337.2">
    <molecule id="Q9HCM9-1"/>
    <property type="protein sequence ID" value="ENSP00000450288.1"/>
    <property type="gene ID" value="ENSG00000226437.10"/>
</dbReference>
<dbReference type="Ensembl" id="ENST00000552520.2">
    <molecule id="Q9HCM9-1"/>
    <property type="protein sequence ID" value="ENSP00000448462.1"/>
    <property type="gene ID" value="ENSG00000229929.10"/>
</dbReference>
<dbReference type="GeneID" id="56658"/>
<dbReference type="KEGG" id="hsa:56658"/>
<dbReference type="MANE-Select" id="ENST00000396551.9">
    <molecule id="Q9HCM9-2"/>
    <property type="protein sequence ID" value="ENSP00000379800.3"/>
    <property type="RefSeq nucleotide sequence ID" value="NM_001369521.2"/>
    <property type="RefSeq protein sequence ID" value="NP_001356450.1"/>
</dbReference>
<dbReference type="UCSC" id="uc003nqb.4">
    <molecule id="Q9HCM9-1"/>
    <property type="organism name" value="human"/>
</dbReference>
<dbReference type="AGR" id="HGNC:10065"/>
<dbReference type="CTD" id="56658"/>
<dbReference type="DisGeNET" id="56658"/>
<dbReference type="GeneCards" id="TRIM39"/>
<dbReference type="HGNC" id="HGNC:10065">
    <property type="gene designation" value="TRIM39"/>
</dbReference>
<dbReference type="HPA" id="ENSG00000204599">
    <property type="expression patterns" value="Low tissue specificity"/>
</dbReference>
<dbReference type="MIM" id="605700">
    <property type="type" value="gene"/>
</dbReference>
<dbReference type="neXtProt" id="NX_Q9HCM9"/>
<dbReference type="OpenTargets" id="ENSG00000204599"/>
<dbReference type="PharmGKB" id="PA35535"/>
<dbReference type="VEuPathDB" id="HostDB:ENSG00000204599"/>
<dbReference type="eggNOG" id="KOG2177">
    <property type="taxonomic scope" value="Eukaryota"/>
</dbReference>
<dbReference type="GeneTree" id="ENSGT00940000154126"/>
<dbReference type="HOGENOM" id="CLU_013137_0_3_1"/>
<dbReference type="InParanoid" id="Q9HCM9"/>
<dbReference type="OMA" id="QDITRCK"/>
<dbReference type="OrthoDB" id="128536at2759"/>
<dbReference type="PAN-GO" id="Q9HCM9">
    <property type="GO annotations" value="8 GO annotations based on evolutionary models"/>
</dbReference>
<dbReference type="PhylomeDB" id="Q9HCM9"/>
<dbReference type="TreeFam" id="TF342569"/>
<dbReference type="PathwayCommons" id="Q9HCM9"/>
<dbReference type="Reactome" id="R-HSA-983168">
    <property type="pathway name" value="Antigen processing: Ubiquitination &amp; Proteasome degradation"/>
</dbReference>
<dbReference type="SignaLink" id="Q9HCM9"/>
<dbReference type="SIGNOR" id="Q9HCM9"/>
<dbReference type="UniPathway" id="UPA00143"/>
<dbReference type="BioGRID-ORCS" id="56658">
    <property type="hits" value="13 hits in 1192 CRISPR screens"/>
</dbReference>
<dbReference type="ChiTaRS" id="TRIM39">
    <property type="organism name" value="human"/>
</dbReference>
<dbReference type="EvolutionaryTrace" id="Q9HCM9"/>
<dbReference type="GenomeRNAi" id="56658"/>
<dbReference type="Pharos" id="Q9HCM9">
    <property type="development level" value="Tbio"/>
</dbReference>
<dbReference type="PRO" id="PR:Q9HCM9"/>
<dbReference type="Proteomes" id="UP000005640">
    <property type="component" value="Chromosome 6"/>
</dbReference>
<dbReference type="RNAct" id="Q9HCM9">
    <property type="molecule type" value="protein"/>
</dbReference>
<dbReference type="Bgee" id="ENSG00000204599">
    <property type="expression patterns" value="Expressed in granulocyte and 103 other cell types or tissues"/>
</dbReference>
<dbReference type="ExpressionAtlas" id="Q9HCM9">
    <property type="expression patterns" value="baseline and differential"/>
</dbReference>
<dbReference type="GO" id="GO:0005737">
    <property type="term" value="C:cytoplasm"/>
    <property type="evidence" value="ECO:0000318"/>
    <property type="project" value="GO_Central"/>
</dbReference>
<dbReference type="GO" id="GO:0005829">
    <property type="term" value="C:cytosol"/>
    <property type="evidence" value="ECO:0000314"/>
    <property type="project" value="BHF-UCL"/>
</dbReference>
<dbReference type="GO" id="GO:0005739">
    <property type="term" value="C:mitochondrion"/>
    <property type="evidence" value="ECO:0000314"/>
    <property type="project" value="BHF-UCL"/>
</dbReference>
<dbReference type="GO" id="GO:0005634">
    <property type="term" value="C:nucleus"/>
    <property type="evidence" value="ECO:0000314"/>
    <property type="project" value="UniProtKB"/>
</dbReference>
<dbReference type="GO" id="GO:0042802">
    <property type="term" value="F:identical protein binding"/>
    <property type="evidence" value="ECO:0000353"/>
    <property type="project" value="IntAct"/>
</dbReference>
<dbReference type="GO" id="GO:0061630">
    <property type="term" value="F:ubiquitin protein ligase activity"/>
    <property type="evidence" value="ECO:0000318"/>
    <property type="project" value="GO_Central"/>
</dbReference>
<dbReference type="GO" id="GO:0008270">
    <property type="term" value="F:zinc ion binding"/>
    <property type="evidence" value="ECO:0007669"/>
    <property type="project" value="UniProtKB-KW"/>
</dbReference>
<dbReference type="GO" id="GO:0006915">
    <property type="term" value="P:apoptotic process"/>
    <property type="evidence" value="ECO:0007669"/>
    <property type="project" value="UniProtKB-KW"/>
</dbReference>
<dbReference type="GO" id="GO:0045087">
    <property type="term" value="P:innate immune response"/>
    <property type="evidence" value="ECO:0000318"/>
    <property type="project" value="GO_Central"/>
</dbReference>
<dbReference type="GO" id="GO:0007095">
    <property type="term" value="P:mitotic G2 DNA damage checkpoint signaling"/>
    <property type="evidence" value="ECO:0000315"/>
    <property type="project" value="UniProtKB"/>
</dbReference>
<dbReference type="GO" id="GO:0043124">
    <property type="term" value="P:negative regulation of canonical NF-kappaB signal transduction"/>
    <property type="evidence" value="ECO:0000315"/>
    <property type="project" value="UniProtKB"/>
</dbReference>
<dbReference type="GO" id="GO:0032435">
    <property type="term" value="P:negative regulation of proteasomal ubiquitin-dependent protein catabolic process"/>
    <property type="evidence" value="ECO:0000315"/>
    <property type="project" value="UniProtKB"/>
</dbReference>
<dbReference type="GO" id="GO:2000059">
    <property type="term" value="P:negative regulation of ubiquitin-dependent protein catabolic process"/>
    <property type="evidence" value="ECO:0000314"/>
    <property type="project" value="BHF-UCL"/>
</dbReference>
<dbReference type="GO" id="GO:2001235">
    <property type="term" value="P:positive regulation of apoptotic signaling pathway"/>
    <property type="evidence" value="ECO:0000314"/>
    <property type="project" value="BHF-UCL"/>
</dbReference>
<dbReference type="GO" id="GO:0050821">
    <property type="term" value="P:protein stabilization"/>
    <property type="evidence" value="ECO:0000315"/>
    <property type="project" value="UniProtKB"/>
</dbReference>
<dbReference type="GO" id="GO:0016567">
    <property type="term" value="P:protein ubiquitination"/>
    <property type="evidence" value="ECO:0007669"/>
    <property type="project" value="UniProtKB-UniPathway"/>
</dbReference>
<dbReference type="GO" id="GO:1902806">
    <property type="term" value="P:regulation of cell cycle G1/S phase transition"/>
    <property type="evidence" value="ECO:0000315"/>
    <property type="project" value="UniProtKB"/>
</dbReference>
<dbReference type="GO" id="GO:0010468">
    <property type="term" value="P:regulation of gene expression"/>
    <property type="evidence" value="ECO:0000318"/>
    <property type="project" value="GO_Central"/>
</dbReference>
<dbReference type="CDD" id="cd19780">
    <property type="entry name" value="Bbox2_TRIM39-like"/>
    <property type="match status" value="1"/>
</dbReference>
<dbReference type="CDD" id="cd16594">
    <property type="entry name" value="RING-HC_TRIM7-like_C-IV"/>
    <property type="match status" value="1"/>
</dbReference>
<dbReference type="CDD" id="cd13745">
    <property type="entry name" value="SPRY_PRY_TRIM39"/>
    <property type="match status" value="1"/>
</dbReference>
<dbReference type="FunFam" id="3.30.160.60:FF:004978">
    <property type="match status" value="1"/>
</dbReference>
<dbReference type="FunFam" id="2.60.120.920:FF:000004">
    <property type="entry name" value="Butyrophilin subfamily 1 member A1"/>
    <property type="match status" value="1"/>
</dbReference>
<dbReference type="FunFam" id="3.30.40.10:FF:000171">
    <property type="entry name" value="E3 ubiquitin-protein ligase TRIM39"/>
    <property type="match status" value="1"/>
</dbReference>
<dbReference type="Gene3D" id="2.60.120.920">
    <property type="match status" value="1"/>
</dbReference>
<dbReference type="Gene3D" id="3.30.160.60">
    <property type="entry name" value="Classic Zinc Finger"/>
    <property type="match status" value="1"/>
</dbReference>
<dbReference type="Gene3D" id="3.30.40.10">
    <property type="entry name" value="Zinc/RING finger domain, C3HC4 (zinc finger)"/>
    <property type="match status" value="1"/>
</dbReference>
<dbReference type="InterPro" id="IPR001870">
    <property type="entry name" value="B30.2/SPRY"/>
</dbReference>
<dbReference type="InterPro" id="IPR043136">
    <property type="entry name" value="B30.2/SPRY_sf"/>
</dbReference>
<dbReference type="InterPro" id="IPR003879">
    <property type="entry name" value="Butyrophylin_SPRY"/>
</dbReference>
<dbReference type="InterPro" id="IPR013320">
    <property type="entry name" value="ConA-like_dom_sf"/>
</dbReference>
<dbReference type="InterPro" id="IPR006574">
    <property type="entry name" value="PRY"/>
</dbReference>
<dbReference type="InterPro" id="IPR035033">
    <property type="entry name" value="PRY/SPRY_TRIM39"/>
</dbReference>
<dbReference type="InterPro" id="IPR003877">
    <property type="entry name" value="SPRY_dom"/>
</dbReference>
<dbReference type="InterPro" id="IPR050143">
    <property type="entry name" value="TRIM/RBCC"/>
</dbReference>
<dbReference type="InterPro" id="IPR000315">
    <property type="entry name" value="Znf_B-box"/>
</dbReference>
<dbReference type="InterPro" id="IPR001841">
    <property type="entry name" value="Znf_RING"/>
</dbReference>
<dbReference type="InterPro" id="IPR013083">
    <property type="entry name" value="Znf_RING/FYVE/PHD"/>
</dbReference>
<dbReference type="InterPro" id="IPR017907">
    <property type="entry name" value="Znf_RING_CS"/>
</dbReference>
<dbReference type="PANTHER" id="PTHR24103">
    <property type="entry name" value="E3 UBIQUITIN-PROTEIN LIGASE TRIM"/>
    <property type="match status" value="1"/>
</dbReference>
<dbReference type="Pfam" id="PF13765">
    <property type="entry name" value="PRY"/>
    <property type="match status" value="1"/>
</dbReference>
<dbReference type="Pfam" id="PF00622">
    <property type="entry name" value="SPRY"/>
    <property type="match status" value="1"/>
</dbReference>
<dbReference type="Pfam" id="PF00643">
    <property type="entry name" value="zf-B_box"/>
    <property type="match status" value="1"/>
</dbReference>
<dbReference type="Pfam" id="PF15227">
    <property type="entry name" value="zf-C3HC4_4"/>
    <property type="match status" value="1"/>
</dbReference>
<dbReference type="PRINTS" id="PR01407">
    <property type="entry name" value="BUTYPHLNCDUF"/>
</dbReference>
<dbReference type="SMART" id="SM00336">
    <property type="entry name" value="BBOX"/>
    <property type="match status" value="1"/>
</dbReference>
<dbReference type="SMART" id="SM00589">
    <property type="entry name" value="PRY"/>
    <property type="match status" value="1"/>
</dbReference>
<dbReference type="SMART" id="SM00184">
    <property type="entry name" value="RING"/>
    <property type="match status" value="1"/>
</dbReference>
<dbReference type="SMART" id="SM00449">
    <property type="entry name" value="SPRY"/>
    <property type="match status" value="1"/>
</dbReference>
<dbReference type="SUPFAM" id="SSF57845">
    <property type="entry name" value="B-box zinc-binding domain"/>
    <property type="match status" value="1"/>
</dbReference>
<dbReference type="SUPFAM" id="SSF49899">
    <property type="entry name" value="Concanavalin A-like lectins/glucanases"/>
    <property type="match status" value="1"/>
</dbReference>
<dbReference type="SUPFAM" id="SSF57850">
    <property type="entry name" value="RING/U-box"/>
    <property type="match status" value="1"/>
</dbReference>
<dbReference type="PROSITE" id="PS50188">
    <property type="entry name" value="B302_SPRY"/>
    <property type="match status" value="1"/>
</dbReference>
<dbReference type="PROSITE" id="PS50119">
    <property type="entry name" value="ZF_BBOX"/>
    <property type="match status" value="1"/>
</dbReference>
<dbReference type="PROSITE" id="PS00518">
    <property type="entry name" value="ZF_RING_1"/>
    <property type="match status" value="1"/>
</dbReference>
<dbReference type="PROSITE" id="PS50089">
    <property type="entry name" value="ZF_RING_2"/>
    <property type="match status" value="1"/>
</dbReference>
<evidence type="ECO:0000255" key="1"/>
<evidence type="ECO:0000255" key="2">
    <source>
        <dbReference type="PROSITE-ProRule" id="PRU00024"/>
    </source>
</evidence>
<evidence type="ECO:0000255" key="3">
    <source>
        <dbReference type="PROSITE-ProRule" id="PRU00175"/>
    </source>
</evidence>
<evidence type="ECO:0000255" key="4">
    <source>
        <dbReference type="PROSITE-ProRule" id="PRU00548"/>
    </source>
</evidence>
<evidence type="ECO:0000269" key="5">
    <source>
    </source>
</evidence>
<evidence type="ECO:0000269" key="6">
    <source>
    </source>
</evidence>
<evidence type="ECO:0000269" key="7">
    <source>
    </source>
</evidence>
<evidence type="ECO:0000269" key="8">
    <source>
    </source>
</evidence>
<evidence type="ECO:0000303" key="9">
    <source>
    </source>
</evidence>
<evidence type="ECO:0000303" key="10">
    <source>
    </source>
</evidence>
<evidence type="ECO:0000303" key="11">
    <source ref="2"/>
</evidence>
<evidence type="ECO:0000305" key="12"/>
<evidence type="ECO:0007829" key="13">
    <source>
        <dbReference type="PDB" id="2DID"/>
    </source>
</evidence>
<evidence type="ECO:0007829" key="14">
    <source>
        <dbReference type="PDB" id="2ECJ"/>
    </source>
</evidence>
<protein>
    <recommendedName>
        <fullName>E3 ubiquitin-protein ligase TRIM39</fullName>
        <ecNumber>2.3.2.27</ecNumber>
    </recommendedName>
    <alternativeName>
        <fullName>RING finger protein 23</fullName>
    </alternativeName>
    <alternativeName>
        <fullName evidence="12">RING-type E3 ubiquitin transferase TRIM39</fullName>
    </alternativeName>
    <alternativeName>
        <fullName>Testis-abundant finger protein</fullName>
    </alternativeName>
    <alternativeName>
        <fullName>Tripartite motif-containing protein 39</fullName>
    </alternativeName>
</protein>
<keyword id="KW-0002">3D-structure</keyword>
<keyword id="KW-0025">Alternative splicing</keyword>
<keyword id="KW-0053">Apoptosis</keyword>
<keyword id="KW-0131">Cell cycle</keyword>
<keyword id="KW-0175">Coiled coil</keyword>
<keyword id="KW-0963">Cytoplasm</keyword>
<keyword id="KW-0479">Metal-binding</keyword>
<keyword id="KW-0496">Mitochondrion</keyword>
<keyword id="KW-0539">Nucleus</keyword>
<keyword id="KW-1267">Proteomics identification</keyword>
<keyword id="KW-1185">Reference proteome</keyword>
<keyword id="KW-0808">Transferase</keyword>
<keyword id="KW-0832">Ubl conjugation</keyword>
<keyword id="KW-0833">Ubl conjugation pathway</keyword>
<keyword id="KW-0862">Zinc</keyword>
<keyword id="KW-0863">Zinc-finger</keyword>
<gene>
    <name type="primary">TRIM39</name>
    <name type="synonym">RNF23</name>
    <name type="synonym">TFP</name>
</gene>
<comment type="function">
    <molecule>Isoform 1</molecule>
    <text evidence="5 6 7">E3 ubiquitin-protein ligase (PubMed:22529100). May facilitate apoptosis by inhibiting APC/C-Cdh1-mediated poly-ubiquitination and subsequent proteasome-mediated degradation of the pro-apoptotic protein MOAP1 (PubMed:19100260, PubMed:22529100). Regulates the G1/S transition of the cell cycle and DNA damage-induced G2 arrest by stabilizing CDKN1A/p21 (PubMed:23213251). Positively regulates CDKN1A/p21 stability by competing with DTL for CDKN1A/p21 binding, therefore disrupting DCX(DTL) E3 ubiquitin ligase complex-mediated CDKN1A/p21 ubiquitination and degradation (PubMed:23213251).</text>
</comment>
<comment type="function">
    <molecule>Isoform 2</molecule>
    <text evidence="7 8">Regulates the G1/S transition of the cell cycle and DNA damage-induced G2 arrest by stabilizing CDKN1A/p21 (PubMed:23213251). Positively regulates CDKN1A/p21 stability by competing with DTL for CDKN1A/p21 binding, therefore disrupting DCX(DTL) E3 ubiquitin ligase complex-mediated CDKN1A/p21 ubiquitination and degradation (PubMed:23213251). Negatively regulates the canonical NF-kappa-B signaling pathway via stabilization of CACTIN in an ubiquitination-independent manner (PubMed:26363554).</text>
</comment>
<comment type="catalytic activity">
    <reaction>
        <text>S-ubiquitinyl-[E2 ubiquitin-conjugating enzyme]-L-cysteine + [acceptor protein]-L-lysine = [E2 ubiquitin-conjugating enzyme]-L-cysteine + N(6)-ubiquitinyl-[acceptor protein]-L-lysine.</text>
        <dbReference type="EC" id="2.3.2.27"/>
    </reaction>
</comment>
<comment type="pathway">
    <text>Protein modification; protein ubiquitination.</text>
</comment>
<comment type="subunit">
    <text evidence="5 7 8">Isoform 1 interacts with MOAP1 (PubMed:19100260). Isoform 1 and isoform 2 interact with CDKN1A (PubMed:23213251). Isoform 2 interacts (via domain B box-type) with CACTIN (PubMed:26363554).</text>
</comment>
<comment type="interaction">
    <interactant intactId="EBI-739510">
        <id>Q9HCM9</id>
    </interactant>
    <interactant intactId="EBI-395261">
        <id>P24863</id>
        <label>CCNC</label>
    </interactant>
    <organismsDiffer>false</organismsDiffer>
    <experiments>4</experiments>
</comment>
<comment type="interaction">
    <interactant intactId="EBI-739510">
        <id>Q9HCM9</id>
    </interactant>
    <interactant intactId="EBI-10175550">
        <id>B2R886</id>
        <label>DC-UbP</label>
    </interactant>
    <organismsDiffer>false</organismsDiffer>
    <experiments>3</experiments>
</comment>
<comment type="interaction">
    <interactant intactId="EBI-739510">
        <id>Q9HCM9</id>
    </interactant>
    <interactant intactId="EBI-740086">
        <id>Q96GG9</id>
        <label>DCUN1D1</label>
    </interactant>
    <organismsDiffer>false</organismsDiffer>
    <experiments>4</experiments>
</comment>
<comment type="interaction">
    <interactant intactId="EBI-739510">
        <id>Q9HCM9</id>
    </interactant>
    <interactant intactId="EBI-10233719">
        <id>Q14689-6</id>
        <label>DIP2A</label>
    </interactant>
    <organismsDiffer>false</organismsDiffer>
    <experiments>3</experiments>
</comment>
<comment type="interaction">
    <interactant intactId="EBI-739510">
        <id>Q9HCM9</id>
    </interactant>
    <interactant intactId="EBI-73473">
        <id>Q14240</id>
        <label>EIF4A2</label>
    </interactant>
    <organismsDiffer>false</organismsDiffer>
    <experiments>4</experiments>
</comment>
<comment type="interaction">
    <interactant intactId="EBI-739510">
        <id>Q9HCM9</id>
    </interactant>
    <interactant intactId="EBI-10232522">
        <id>Q14240-2</id>
        <label>EIF4A2</label>
    </interactant>
    <organismsDiffer>false</organismsDiffer>
    <experiments>3</experiments>
</comment>
<comment type="interaction">
    <interactant intactId="EBI-739510">
        <id>Q9HCM9</id>
    </interactant>
    <interactant intactId="EBI-10182490">
        <id>O15197-2</id>
        <label>EPHB6</label>
    </interactant>
    <organismsDiffer>false</organismsDiffer>
    <experiments>3</experiments>
</comment>
<comment type="interaction">
    <interactant intactId="EBI-739510">
        <id>Q9HCM9</id>
    </interactant>
    <interactant intactId="EBI-739832">
        <id>Q8TBB1</id>
        <label>LNX1</label>
    </interactant>
    <organismsDiffer>false</organismsDiffer>
    <experiments>3</experiments>
</comment>
<comment type="interaction">
    <interactant intactId="EBI-739510">
        <id>Q9HCM9</id>
    </interactant>
    <interactant intactId="EBI-1044504">
        <id>Q9BS40</id>
        <label>LXN</label>
    </interactant>
    <organismsDiffer>false</organismsDiffer>
    <experiments>3</experiments>
</comment>
<comment type="interaction">
    <interactant intactId="EBI-739510">
        <id>Q9HCM9</id>
    </interactant>
    <interactant intactId="EBI-394640">
        <id>Q9BUE0</id>
        <label>MED18</label>
    </interactant>
    <organismsDiffer>false</organismsDiffer>
    <experiments>3</experiments>
</comment>
<comment type="interaction">
    <interactant intactId="EBI-739510">
        <id>Q9HCM9</id>
    </interactant>
    <interactant intactId="EBI-389883">
        <id>P16333</id>
        <label>NCK1</label>
    </interactant>
    <organismsDiffer>false</organismsDiffer>
    <experiments>2</experiments>
</comment>
<comment type="interaction">
    <interactant intactId="EBI-739510">
        <id>Q9HCM9</id>
    </interactant>
    <interactant intactId="EBI-741774">
        <id>Q9UNA4</id>
        <label>POLI</label>
    </interactant>
    <organismsDiffer>false</organismsDiffer>
    <experiments>4</experiments>
</comment>
<comment type="interaction">
    <interactant intactId="EBI-739510">
        <id>Q9HCM9</id>
    </interactant>
    <interactant intactId="EBI-744322">
        <id>O43395</id>
        <label>PRPF3</label>
    </interactant>
    <organismsDiffer>false</organismsDiffer>
    <experiments>4</experiments>
</comment>
<comment type="interaction">
    <interactant intactId="EBI-739510">
        <id>Q9HCM9</id>
    </interactant>
    <interactant intactId="EBI-357793">
        <id>P60900</id>
        <label>PSMA6</label>
    </interactant>
    <organismsDiffer>false</organismsDiffer>
    <experiments>3</experiments>
</comment>
<comment type="interaction">
    <interactant intactId="EBI-739510">
        <id>Q9HCM9</id>
    </interactant>
    <interactant intactId="EBI-750973">
        <id>O00233</id>
        <label>PSMD9</label>
    </interactant>
    <organismsDiffer>false</organismsDiffer>
    <experiments>4</experiments>
</comment>
<comment type="interaction">
    <interactant intactId="EBI-739510">
        <id>Q9HCM9</id>
    </interactant>
    <interactant intactId="EBI-10253121">
        <id>Q6P9E2</id>
        <label>RECK</label>
    </interactant>
    <organismsDiffer>false</organismsDiffer>
    <experiments>3</experiments>
</comment>
<comment type="interaction">
    <interactant intactId="EBI-739510">
        <id>Q9HCM9</id>
    </interactant>
    <interactant intactId="EBI-10173195">
        <id>A2RU48</id>
        <label>SMCO3</label>
    </interactant>
    <organismsDiffer>false</organismsDiffer>
    <experiments>3</experiments>
</comment>
<comment type="interaction">
    <interactant intactId="EBI-739510">
        <id>Q9HCM9</id>
    </interactant>
    <interactant intactId="EBI-743894">
        <id>Q9Y577</id>
        <label>TRIM17</label>
    </interactant>
    <organismsDiffer>false</organismsDiffer>
    <experiments>8</experiments>
</comment>
<comment type="interaction">
    <interactant intactId="EBI-739510">
        <id>Q9HCM9</id>
    </interactant>
    <interactant intactId="EBI-81290">
        <id>P19474</id>
        <label>TRIM21</label>
    </interactant>
    <organismsDiffer>false</organismsDiffer>
    <experiments>4</experiments>
</comment>
<comment type="interaction">
    <interactant intactId="EBI-739510">
        <id>Q9HCM9</id>
    </interactant>
    <interactant intactId="EBI-739510">
        <id>Q9HCM9</id>
        <label>TRIM39</label>
    </interactant>
    <organismsDiffer>false</organismsDiffer>
    <experiments>6</experiments>
</comment>
<comment type="interaction">
    <interactant intactId="EBI-739510">
        <id>Q9HCM9</id>
    </interactant>
    <interactant intactId="EBI-8636434">
        <id>Q5I0X7</id>
        <label>TTC32</label>
    </interactant>
    <organismsDiffer>false</organismsDiffer>
    <experiments>3</experiments>
</comment>
<comment type="interaction">
    <interactant intactId="EBI-739510">
        <id>Q9HCM9</id>
    </interactant>
    <interactant intactId="EBI-749370">
        <id>Q9BSL1</id>
        <label>UBAC1</label>
    </interactant>
    <organismsDiffer>false</organismsDiffer>
    <experiments>3</experiments>
</comment>
<comment type="interaction">
    <interactant intactId="EBI-739510">
        <id>Q9HCM9</id>
    </interactant>
    <interactant intactId="EBI-743540">
        <id>P51668</id>
        <label>UBE2D1</label>
    </interactant>
    <organismsDiffer>false</organismsDiffer>
    <experiments>6</experiments>
</comment>
<comment type="interaction">
    <interactant intactId="EBI-739510">
        <id>Q9HCM9</id>
    </interactant>
    <interactant intactId="EBI-348268">
        <id>P61077</id>
        <label>UBE2D3</label>
    </interactant>
    <organismsDiffer>false</organismsDiffer>
    <experiments>6</experiments>
</comment>
<comment type="interaction">
    <interactant intactId="EBI-739510">
        <id>Q9HCM9</id>
    </interactant>
    <interactant intactId="EBI-745527">
        <id>Q9Y2X8</id>
        <label>UBE2D4</label>
    </interactant>
    <organismsDiffer>false</organismsDiffer>
    <experiments>5</experiments>
</comment>
<comment type="interaction">
    <interactant intactId="EBI-739510">
        <id>Q9HCM9</id>
    </interactant>
    <interactant intactId="EBI-2129763">
        <id>Q96LR5</id>
        <label>UBE2E2</label>
    </interactant>
    <organismsDiffer>false</organismsDiffer>
    <experiments>6</experiments>
</comment>
<comment type="interaction">
    <interactant intactId="EBI-739510">
        <id>Q9HCM9</id>
    </interactant>
    <interactant intactId="EBI-348496">
        <id>Q969T4</id>
        <label>UBE2E3</label>
    </interactant>
    <organismsDiffer>false</organismsDiffer>
    <experiments>5</experiments>
</comment>
<comment type="interaction">
    <interactant intactId="EBI-739510">
        <id>Q9HCM9</id>
    </interactant>
    <interactant intactId="EBI-473850">
        <id>P61086</id>
        <label>UBE2K</label>
    </interactant>
    <organismsDiffer>false</organismsDiffer>
    <experiments>3</experiments>
</comment>
<comment type="interaction">
    <interactant intactId="EBI-739510">
        <id>Q9HCM9</id>
    </interactant>
    <interactant intactId="EBI-745871">
        <id>Q9HAC8</id>
        <label>UBTD1</label>
    </interactant>
    <organismsDiffer>false</organismsDiffer>
    <experiments>4</experiments>
</comment>
<comment type="interaction">
    <interactant intactId="EBI-739510">
        <id>Q9HCM9</id>
    </interactant>
    <interactant intactId="EBI-1058647">
        <id>Q04323</id>
        <label>UBXN1</label>
    </interactant>
    <organismsDiffer>false</organismsDiffer>
    <experiments>3</experiments>
</comment>
<comment type="interaction">
    <interactant intactId="EBI-739510">
        <id>Q9HCM9</id>
    </interactant>
    <interactant intactId="EBI-1993899">
        <id>Q9BZV1</id>
        <label>UBXN6</label>
    </interactant>
    <organismsDiffer>false</organismsDiffer>
    <experiments>5</experiments>
</comment>
<comment type="interaction">
    <interactant intactId="EBI-739510">
        <id>Q9HCM9</id>
    </interactant>
    <interactant intactId="EBI-10264625">
        <id>Q8IZQ1-2</id>
        <label>WDFY3</label>
    </interactant>
    <organismsDiffer>false</organismsDiffer>
    <experiments>3</experiments>
</comment>
<comment type="interaction">
    <interactant intactId="EBI-739510">
        <id>Q9HCM9</id>
    </interactant>
    <interactant intactId="EBI-2818641">
        <id>Q969J2</id>
        <label>ZKSCAN4</label>
    </interactant>
    <organismsDiffer>false</organismsDiffer>
    <experiments>3</experiments>
</comment>
<comment type="interaction">
    <interactant intactId="EBI-739510">
        <id>Q9HCM9</id>
    </interactant>
    <interactant intactId="EBI-2841331">
        <id>P17031</id>
        <label>ZNF26</label>
    </interactant>
    <organismsDiffer>false</organismsDiffer>
    <experiments>4</experiments>
</comment>
<comment type="interaction">
    <interactant intactId="EBI-739510">
        <id>Q9HCM9</id>
    </interactant>
    <interactant intactId="EBI-9977437">
        <id>A8K2R3</id>
    </interactant>
    <organismsDiffer>false</organismsDiffer>
    <experiments>3</experiments>
</comment>
<comment type="interaction">
    <interactant intactId="EBI-11523450">
        <id>Q9HCM9-2</id>
    </interactant>
    <interactant intactId="EBI-740086">
        <id>Q96GG9</id>
        <label>DCUN1D1</label>
    </interactant>
    <organismsDiffer>false</organismsDiffer>
    <experiments>7</experiments>
</comment>
<comment type="interaction">
    <interactant intactId="EBI-11523450">
        <id>Q9HCM9-2</id>
    </interactant>
    <interactant intactId="EBI-10182490">
        <id>O15197-2</id>
        <label>EPHB6</label>
    </interactant>
    <organismsDiffer>false</organismsDiffer>
    <experiments>5</experiments>
</comment>
<comment type="interaction">
    <interactant intactId="EBI-11523450">
        <id>Q9HCM9-2</id>
    </interactant>
    <interactant intactId="EBI-3909086">
        <id>Q14353</id>
        <label>GAMT</label>
    </interactant>
    <organismsDiffer>false</organismsDiffer>
    <experiments>5</experiments>
</comment>
<comment type="interaction">
    <interactant intactId="EBI-11523450">
        <id>Q9HCM9-2</id>
    </interactant>
    <interactant intactId="EBI-739832">
        <id>Q8TBB1</id>
        <label>LNX1</label>
    </interactant>
    <organismsDiffer>false</organismsDiffer>
    <experiments>3</experiments>
</comment>
<comment type="interaction">
    <interactant intactId="EBI-11523450">
        <id>Q9HCM9-2</id>
    </interactant>
    <interactant intactId="EBI-394640">
        <id>Q9BUE0</id>
        <label>MED18</label>
    </interactant>
    <organismsDiffer>false</organismsDiffer>
    <experiments>3</experiments>
</comment>
<comment type="interaction">
    <interactant intactId="EBI-11523450">
        <id>Q9HCM9-2</id>
    </interactant>
    <interactant intactId="EBI-11980301">
        <id>Q8N3F0</id>
        <label>MTURN</label>
    </interactant>
    <organismsDiffer>false</organismsDiffer>
    <experiments>3</experiments>
</comment>
<comment type="interaction">
    <interactant intactId="EBI-11523450">
        <id>Q9HCM9-2</id>
    </interactant>
    <interactant intactId="EBI-744322">
        <id>O43395</id>
        <label>PRPF3</label>
    </interactant>
    <organismsDiffer>false</organismsDiffer>
    <experiments>8</experiments>
</comment>
<comment type="interaction">
    <interactant intactId="EBI-11523450">
        <id>Q9HCM9-2</id>
    </interactant>
    <interactant intactId="EBI-357793">
        <id>P60900</id>
        <label>PSMA6</label>
    </interactant>
    <organismsDiffer>false</organismsDiffer>
    <experiments>5</experiments>
</comment>
<comment type="interaction">
    <interactant intactId="EBI-11523450">
        <id>Q9HCM9-2</id>
    </interactant>
    <interactant intactId="EBI-372273">
        <id>P20618</id>
        <label>PSMB1</label>
    </interactant>
    <organismsDiffer>false</organismsDiffer>
    <experiments>3</experiments>
</comment>
<comment type="interaction">
    <interactant intactId="EBI-11523450">
        <id>Q9HCM9-2</id>
    </interactant>
    <interactant intactId="EBI-746453">
        <id>P54725</id>
        <label>RAD23A</label>
    </interactant>
    <organismsDiffer>false</organismsDiffer>
    <experiments>3</experiments>
</comment>
<comment type="interaction">
    <interactant intactId="EBI-11523450">
        <id>Q9HCM9-2</id>
    </interactant>
    <interactant intactId="EBI-396669">
        <id>Q9Y3C5</id>
        <label>RNF11</label>
    </interactant>
    <organismsDiffer>false</organismsDiffer>
    <experiments>3</experiments>
</comment>
<comment type="interaction">
    <interactant intactId="EBI-11523450">
        <id>Q9HCM9-2</id>
    </interactant>
    <interactant intactId="EBI-81290">
        <id>P19474</id>
        <label>TRIM21</label>
    </interactant>
    <organismsDiffer>false</organismsDiffer>
    <experiments>3</experiments>
</comment>
<comment type="interaction">
    <interactant intactId="EBI-11523450">
        <id>Q9HCM9-2</id>
    </interactant>
    <interactant intactId="EBI-11523450">
        <id>Q9HCM9-2</id>
        <label>TRIM39</label>
    </interactant>
    <organismsDiffer>false</organismsDiffer>
    <experiments>3</experiments>
</comment>
<comment type="interaction">
    <interactant intactId="EBI-11523450">
        <id>Q9HCM9-2</id>
    </interactant>
    <interactant intactId="EBI-743540">
        <id>P51668</id>
        <label>UBE2D1</label>
    </interactant>
    <organismsDiffer>false</organismsDiffer>
    <experiments>5</experiments>
</comment>
<comment type="interaction">
    <interactant intactId="EBI-11523450">
        <id>Q9HCM9-2</id>
    </interactant>
    <interactant intactId="EBI-347677">
        <id>P62837</id>
        <label>UBE2D2</label>
    </interactant>
    <organismsDiffer>false</organismsDiffer>
    <experiments>5</experiments>
</comment>
<comment type="interaction">
    <interactant intactId="EBI-11523450">
        <id>Q9HCM9-2</id>
    </interactant>
    <interactant intactId="EBI-348268">
        <id>P61077</id>
        <label>UBE2D3</label>
    </interactant>
    <organismsDiffer>false</organismsDiffer>
    <experiments>5</experiments>
</comment>
<comment type="interaction">
    <interactant intactId="EBI-11523450">
        <id>Q9HCM9-2</id>
    </interactant>
    <interactant intactId="EBI-745527">
        <id>Q9Y2X8</id>
        <label>UBE2D4</label>
    </interactant>
    <organismsDiffer>false</organismsDiffer>
    <experiments>7</experiments>
</comment>
<comment type="interaction">
    <interactant intactId="EBI-11523450">
        <id>Q9HCM9-2</id>
    </interactant>
    <interactant intactId="EBI-2129763">
        <id>Q96LR5</id>
        <label>UBE2E2</label>
    </interactant>
    <organismsDiffer>false</organismsDiffer>
    <experiments>8</experiments>
</comment>
<comment type="interaction">
    <interactant intactId="EBI-11523450">
        <id>Q9HCM9-2</id>
    </interactant>
    <interactant intactId="EBI-348496">
        <id>Q969T4</id>
        <label>UBE2E3</label>
    </interactant>
    <organismsDiffer>false</organismsDiffer>
    <experiments>3</experiments>
</comment>
<comment type="interaction">
    <interactant intactId="EBI-11523450">
        <id>Q9HCM9-2</id>
    </interactant>
    <interactant intactId="EBI-473850">
        <id>P61086</id>
        <label>UBE2K</label>
    </interactant>
    <organismsDiffer>false</organismsDiffer>
    <experiments>8</experiments>
</comment>
<comment type="interaction">
    <interactant intactId="EBI-11523450">
        <id>Q9HCM9-2</id>
    </interactant>
    <interactant intactId="EBI-607755">
        <id>Q9BZL1</id>
        <label>UBL5</label>
    </interactant>
    <organismsDiffer>false</organismsDiffer>
    <experiments>3</experiments>
</comment>
<comment type="interaction">
    <interactant intactId="EBI-11523450">
        <id>Q9HCM9-2</id>
    </interactant>
    <interactant intactId="EBI-745871">
        <id>Q9HAC8</id>
        <label>UBTD1</label>
    </interactant>
    <organismsDiffer>false</organismsDiffer>
    <experiments>5</experiments>
</comment>
<comment type="interaction">
    <interactant intactId="EBI-11523450">
        <id>Q9HCM9-2</id>
    </interactant>
    <interactant intactId="EBI-1993899">
        <id>Q9BZV1</id>
        <label>UBXN6</label>
    </interactant>
    <organismsDiffer>false</organismsDiffer>
    <experiments>3</experiments>
</comment>
<comment type="interaction">
    <interactant intactId="EBI-11523450">
        <id>Q9HCM9-2</id>
    </interactant>
    <interactant intactId="EBI-1993627">
        <id>O94888</id>
        <label>UBXN7</label>
    </interactant>
    <organismsDiffer>false</organismsDiffer>
    <experiments>3</experiments>
</comment>
<comment type="subcellular location">
    <molecule>Isoform 1</molecule>
    <subcellularLocation>
        <location evidence="5">Cytoplasm</location>
        <location evidence="5">Cytosol</location>
    </subcellularLocation>
    <subcellularLocation>
        <location evidence="5">Mitochondrion</location>
    </subcellularLocation>
    <subcellularLocation>
        <location evidence="7">Nucleus</location>
    </subcellularLocation>
    <text evidence="5 7">Found predominantly in the cytosol. Partial shift from the cytosol to the mitochondria when colocalized with MOAP1. Colocalizes with CDKN1A in the nucleus.</text>
</comment>
<comment type="subcellular location">
    <molecule>Isoform 2</molecule>
    <subcellularLocation>
        <location evidence="7">Nucleus</location>
    </subcellularLocation>
    <text evidence="7">Colocalizes with CDKN1A in the nucleus.</text>
</comment>
<comment type="alternative products">
    <event type="alternative splicing"/>
    <isoform>
        <id>Q9HCM9-1</id>
        <name>1</name>
        <name evidence="10">TIM39alpha</name>
        <sequence type="displayed"/>
    </isoform>
    <isoform>
        <id>Q9HCM9-2</id>
        <name>2</name>
        <name evidence="10">TIM39beta</name>
        <sequence type="described" ref="VSP_005755"/>
    </isoform>
</comment>
<comment type="tissue specificity">
    <text evidence="5">Ubiquitous; highly expressed in brain, heart, kidney, liver, skeletal muscle, spleen and testis.</text>
</comment>
<comment type="PTM">
    <text evidence="6">Autoubiquitinated.</text>
</comment>
<comment type="similarity">
    <text evidence="12">Belongs to the TRIM/RBCC family.</text>
</comment>
<feature type="chain" id="PRO_0000056257" description="E3 ubiquitin-protein ligase TRIM39">
    <location>
        <begin position="1"/>
        <end position="518"/>
    </location>
</feature>
<feature type="domain" description="B30.2/SPRY" evidence="4">
    <location>
        <begin position="319"/>
        <end position="514"/>
    </location>
</feature>
<feature type="zinc finger region" description="RING-type" evidence="3">
    <location>
        <begin position="29"/>
        <end position="70"/>
    </location>
</feature>
<feature type="zinc finger region" description="B box-type" evidence="2">
    <location>
        <begin position="102"/>
        <end position="143"/>
    </location>
</feature>
<feature type="region of interest" description="Interaction with CDKN1A" evidence="7">
    <location>
        <begin position="268"/>
        <end position="337"/>
    </location>
</feature>
<feature type="region of interest" description="Interaction with CDKN1A" evidence="7">
    <location>
        <begin position="389"/>
        <end position="518"/>
    </location>
</feature>
<feature type="coiled-coil region" evidence="1">
    <location>
        <begin position="181"/>
        <end position="250"/>
    </location>
</feature>
<feature type="binding site" evidence="2">
    <location>
        <position position="107"/>
    </location>
    <ligand>
        <name>Zn(2+)</name>
        <dbReference type="ChEBI" id="CHEBI:29105"/>
    </ligand>
</feature>
<feature type="binding site" evidence="2">
    <location>
        <position position="110"/>
    </location>
    <ligand>
        <name>Zn(2+)</name>
        <dbReference type="ChEBI" id="CHEBI:29105"/>
    </ligand>
</feature>
<feature type="binding site" evidence="2">
    <location>
        <position position="129"/>
    </location>
    <ligand>
        <name>Zn(2+)</name>
        <dbReference type="ChEBI" id="CHEBI:29105"/>
    </ligand>
</feature>
<feature type="binding site" evidence="2">
    <location>
        <position position="135"/>
    </location>
    <ligand>
        <name>Zn(2+)</name>
        <dbReference type="ChEBI" id="CHEBI:29105"/>
    </ligand>
</feature>
<feature type="splice variant" id="VSP_005755" description="In isoform 2." evidence="9 11">
    <location>
        <begin position="269"/>
        <end position="298"/>
    </location>
</feature>
<feature type="sequence conflict" description="In Ref. 1; BAB16374." evidence="12" ref="1">
    <original>A</original>
    <variation>P</variation>
    <location>
        <position position="137"/>
    </location>
</feature>
<feature type="sequence conflict" description="In Ref. 3; BAD13703." evidence="12" ref="3">
    <original>E</original>
    <variation>K</variation>
    <location>
        <position position="419"/>
    </location>
</feature>
<feature type="strand" evidence="14">
    <location>
        <begin position="30"/>
        <end position="32"/>
    </location>
</feature>
<feature type="helix" evidence="14">
    <location>
        <begin position="50"/>
        <end position="56"/>
    </location>
</feature>
<feature type="turn" evidence="13">
    <location>
        <begin position="108"/>
        <end position="110"/>
    </location>
</feature>
<feature type="strand" evidence="13">
    <location>
        <begin position="116"/>
        <end position="121"/>
    </location>
</feature>
<feature type="strand" evidence="13">
    <location>
        <begin position="123"/>
        <end position="125"/>
    </location>
</feature>
<feature type="helix" evidence="13">
    <location>
        <begin position="127"/>
        <end position="130"/>
    </location>
</feature>
<feature type="turn" evidence="13">
    <location>
        <begin position="134"/>
        <end position="137"/>
    </location>
</feature>
<feature type="strand" evidence="13">
    <location>
        <begin position="140"/>
        <end position="142"/>
    </location>
</feature>
<organism>
    <name type="scientific">Homo sapiens</name>
    <name type="common">Human</name>
    <dbReference type="NCBI Taxonomy" id="9606"/>
    <lineage>
        <taxon>Eukaryota</taxon>
        <taxon>Metazoa</taxon>
        <taxon>Chordata</taxon>
        <taxon>Craniata</taxon>
        <taxon>Vertebrata</taxon>
        <taxon>Euteleostomi</taxon>
        <taxon>Mammalia</taxon>
        <taxon>Eutheria</taxon>
        <taxon>Euarchontoglires</taxon>
        <taxon>Primates</taxon>
        <taxon>Haplorrhini</taxon>
        <taxon>Catarrhini</taxon>
        <taxon>Hominidae</taxon>
        <taxon>Homo</taxon>
    </lineage>
</organism>